<evidence type="ECO:0000250" key="1">
    <source>
        <dbReference type="UniProtKB" id="Q3ZCQ8"/>
    </source>
</evidence>
<evidence type="ECO:0000255" key="2"/>
<evidence type="ECO:0000255" key="3">
    <source>
        <dbReference type="PROSITE-ProRule" id="PRU00336"/>
    </source>
</evidence>
<evidence type="ECO:0000256" key="4">
    <source>
        <dbReference type="SAM" id="MobiDB-lite"/>
    </source>
</evidence>
<evidence type="ECO:0000305" key="5"/>
<protein>
    <recommendedName>
        <fullName>Mitochondrial import inner membrane translocase subunit TIM50</fullName>
    </recommendedName>
</protein>
<feature type="transit peptide" description="Mitochondrion" evidence="2">
    <location>
        <begin position="1"/>
        <end position="21"/>
    </location>
</feature>
<feature type="chain" id="PRO_0000043116" description="Mitochondrial import inner membrane translocase subunit TIM50">
    <location>
        <begin position="22"/>
        <end position="353"/>
    </location>
</feature>
<feature type="topological domain" description="Mitochondrial matrix" evidence="2">
    <location>
        <begin position="22"/>
        <end position="65"/>
    </location>
</feature>
<feature type="transmembrane region" description="Helical" evidence="2">
    <location>
        <begin position="66"/>
        <end position="86"/>
    </location>
</feature>
<feature type="topological domain" description="Mitochondrial intermembrane" evidence="2">
    <location>
        <begin position="87"/>
        <end position="353"/>
    </location>
</feature>
<feature type="domain" description="FCP1 homology" evidence="3">
    <location>
        <begin position="143"/>
        <end position="286"/>
    </location>
</feature>
<feature type="region of interest" description="Disordered" evidence="4">
    <location>
        <begin position="24"/>
        <end position="59"/>
    </location>
</feature>
<feature type="modified residue" description="Phosphoserine" evidence="1">
    <location>
        <position position="341"/>
    </location>
</feature>
<sequence>MAASAALFSRLRSGLRVGARGLCTRLAPPPPRTPEQVTEIANRGGSKAQGPQHQPGSEGPSYAKKIALWIAGLLGAGGTVSIVYIFGNNPVDENGTKIPDEFDSDPILVQQLRRTYKYFKDYRQMIIEPTSPCLLPDPLREPYYQPPYTLVLELTGVLLHPEWSLATGWRFKKRPGIETLFQQLAPLYEIVIFTSETGMTAFPLIDSVDPHGFISYRLFRDATRYMEGHHVKDISCLNRDPARVVVVDCKKEAFRLQPFNGVALRPWDGNSDDRVLLDLSAFLKTIALNQVEDVRTVLEHYALEDDPLEAFKQRQSRLEQEEQQRLAELSKSNRQGLSFGSLASRLWPRSKQP</sequence>
<keyword id="KW-0903">Direct protein sequencing</keyword>
<keyword id="KW-0472">Membrane</keyword>
<keyword id="KW-0496">Mitochondrion</keyword>
<keyword id="KW-0999">Mitochondrion inner membrane</keyword>
<keyword id="KW-0597">Phosphoprotein</keyword>
<keyword id="KW-0653">Protein transport</keyword>
<keyword id="KW-1185">Reference proteome</keyword>
<keyword id="KW-0809">Transit peptide</keyword>
<keyword id="KW-0811">Translocation</keyword>
<keyword id="KW-0812">Transmembrane</keyword>
<keyword id="KW-1133">Transmembrane helix</keyword>
<keyword id="KW-0813">Transport</keyword>
<organism>
    <name type="scientific">Mus musculus</name>
    <name type="common">Mouse</name>
    <dbReference type="NCBI Taxonomy" id="10090"/>
    <lineage>
        <taxon>Eukaryota</taxon>
        <taxon>Metazoa</taxon>
        <taxon>Chordata</taxon>
        <taxon>Craniata</taxon>
        <taxon>Vertebrata</taxon>
        <taxon>Euteleostomi</taxon>
        <taxon>Mammalia</taxon>
        <taxon>Eutheria</taxon>
        <taxon>Euarchontoglires</taxon>
        <taxon>Glires</taxon>
        <taxon>Rodentia</taxon>
        <taxon>Myomorpha</taxon>
        <taxon>Muroidea</taxon>
        <taxon>Muridae</taxon>
        <taxon>Murinae</taxon>
        <taxon>Mus</taxon>
        <taxon>Mus</taxon>
    </lineage>
</organism>
<comment type="function">
    <text evidence="1">Essential component of the TIM23 complex, a complex that mediates the translocation of transit peptide-containing proteins across the mitochondrial inner membrane. Has some phosphatase activity in vitro; however such activity may not be relevant in vivo.</text>
</comment>
<comment type="subunit">
    <text evidence="1">Component of the TIM23 complex at least composed of TIMM23, TIMM17 (TIMM17A or TIMM17B) and TIMM50; within this complex, directly interacts with TIMM23. The complex interacts with the TIMM44 component of the PAM complex and with DNAJC15.</text>
</comment>
<comment type="subcellular location">
    <subcellularLocation>
        <location evidence="1">Mitochondrion inner membrane</location>
        <topology evidence="1">Single-pass membrane protein</topology>
    </subcellularLocation>
</comment>
<comment type="similarity">
    <text evidence="5">Belongs to the TIM50 family.</text>
</comment>
<comment type="sequence caution" evidence="5">
    <conflict type="erroneous initiation">
        <sequence resource="EMBL-CDS" id="AAH10303"/>
    </conflict>
</comment>
<dbReference type="EMBL" id="AY551342">
    <property type="protein sequence ID" value="AAT01209.1"/>
    <property type="molecule type" value="mRNA"/>
</dbReference>
<dbReference type="EMBL" id="AK008340">
    <property type="protein sequence ID" value="BAB25615.1"/>
    <property type="molecule type" value="mRNA"/>
</dbReference>
<dbReference type="EMBL" id="AK167473">
    <property type="protein sequence ID" value="BAE39556.1"/>
    <property type="molecule type" value="mRNA"/>
</dbReference>
<dbReference type="EMBL" id="BC010303">
    <property type="protein sequence ID" value="AAH10303.1"/>
    <property type="status" value="ALT_INIT"/>
    <property type="molecule type" value="mRNA"/>
</dbReference>
<dbReference type="EMBL" id="BC025844">
    <property type="protein sequence ID" value="AAH25844.1"/>
    <property type="molecule type" value="mRNA"/>
</dbReference>
<dbReference type="CCDS" id="CCDS21039.1"/>
<dbReference type="RefSeq" id="NP_079892.1">
    <property type="nucleotide sequence ID" value="NM_025616.4"/>
</dbReference>
<dbReference type="SMR" id="Q9D880"/>
<dbReference type="BioGRID" id="211535">
    <property type="interactions" value="11"/>
</dbReference>
<dbReference type="FunCoup" id="Q9D880">
    <property type="interactions" value="2958"/>
</dbReference>
<dbReference type="IntAct" id="Q9D880">
    <property type="interactions" value="1"/>
</dbReference>
<dbReference type="STRING" id="10090.ENSMUSP00000080614"/>
<dbReference type="GlyGen" id="Q9D880">
    <property type="glycosylation" value="1 site, 1 O-linked glycan (1 site)"/>
</dbReference>
<dbReference type="iPTMnet" id="Q9D880"/>
<dbReference type="PhosphoSitePlus" id="Q9D880"/>
<dbReference type="SwissPalm" id="Q9D880"/>
<dbReference type="jPOST" id="Q9D880"/>
<dbReference type="PaxDb" id="10090-ENSMUSP00000080614"/>
<dbReference type="PeptideAtlas" id="Q9D880"/>
<dbReference type="ProteomicsDB" id="259509"/>
<dbReference type="Pumba" id="Q9D880"/>
<dbReference type="Antibodypedia" id="30377">
    <property type="antibodies" value="183 antibodies from 31 providers"/>
</dbReference>
<dbReference type="DNASU" id="66525"/>
<dbReference type="Ensembl" id="ENSMUST00000081946.5">
    <property type="protein sequence ID" value="ENSMUSP00000080614.5"/>
    <property type="gene ID" value="ENSMUSG00000003438.18"/>
</dbReference>
<dbReference type="GeneID" id="66525"/>
<dbReference type="KEGG" id="mmu:66525"/>
<dbReference type="UCSC" id="uc009fyg.1">
    <property type="organism name" value="mouse"/>
</dbReference>
<dbReference type="AGR" id="MGI:1913775"/>
<dbReference type="CTD" id="92609"/>
<dbReference type="MGI" id="MGI:1913775">
    <property type="gene designation" value="Timm50"/>
</dbReference>
<dbReference type="VEuPathDB" id="HostDB:ENSMUSG00000003438"/>
<dbReference type="eggNOG" id="KOG2832">
    <property type="taxonomic scope" value="Eukaryota"/>
</dbReference>
<dbReference type="GeneTree" id="ENSGT01040000240503"/>
<dbReference type="HOGENOM" id="CLU_048293_1_1_1"/>
<dbReference type="InParanoid" id="Q9D880"/>
<dbReference type="OMA" id="WKSLHYY"/>
<dbReference type="OrthoDB" id="287041at2759"/>
<dbReference type="PhylomeDB" id="Q9D880"/>
<dbReference type="TreeFam" id="TF106198"/>
<dbReference type="BioGRID-ORCS" id="66525">
    <property type="hits" value="29 hits in 77 CRISPR screens"/>
</dbReference>
<dbReference type="ChiTaRS" id="Timm50">
    <property type="organism name" value="mouse"/>
</dbReference>
<dbReference type="PRO" id="PR:Q9D880"/>
<dbReference type="Proteomes" id="UP000000589">
    <property type="component" value="Chromosome 7"/>
</dbReference>
<dbReference type="RNAct" id="Q9D880">
    <property type="molecule type" value="protein"/>
</dbReference>
<dbReference type="Bgee" id="ENSMUSG00000003438">
    <property type="expression patterns" value="Expressed in dorsal pancreas and 266 other cell types or tissues"/>
</dbReference>
<dbReference type="GO" id="GO:0005783">
    <property type="term" value="C:endoplasmic reticulum"/>
    <property type="evidence" value="ECO:0007669"/>
    <property type="project" value="Ensembl"/>
</dbReference>
<dbReference type="GO" id="GO:0005794">
    <property type="term" value="C:Golgi apparatus"/>
    <property type="evidence" value="ECO:0007669"/>
    <property type="project" value="Ensembl"/>
</dbReference>
<dbReference type="GO" id="GO:0005743">
    <property type="term" value="C:mitochondrial inner membrane"/>
    <property type="evidence" value="ECO:0000250"/>
    <property type="project" value="UniProtKB"/>
</dbReference>
<dbReference type="GO" id="GO:0005739">
    <property type="term" value="C:mitochondrion"/>
    <property type="evidence" value="ECO:0007005"/>
    <property type="project" value="MGI"/>
</dbReference>
<dbReference type="GO" id="GO:0016607">
    <property type="term" value="C:nuclear speck"/>
    <property type="evidence" value="ECO:0007669"/>
    <property type="project" value="Ensembl"/>
</dbReference>
<dbReference type="GO" id="GO:0005744">
    <property type="term" value="C:TIM23 mitochondrial import inner membrane translocase complex"/>
    <property type="evidence" value="ECO:0000250"/>
    <property type="project" value="UniProtKB"/>
</dbReference>
<dbReference type="GO" id="GO:0140608">
    <property type="term" value="F:cysteine-type endopeptidase activator activity"/>
    <property type="evidence" value="ECO:0007669"/>
    <property type="project" value="Ensembl"/>
</dbReference>
<dbReference type="GO" id="GO:0005134">
    <property type="term" value="F:interleukin-2 receptor binding"/>
    <property type="evidence" value="ECO:0000266"/>
    <property type="project" value="MGI"/>
</dbReference>
<dbReference type="GO" id="GO:0004721">
    <property type="term" value="F:phosphoprotein phosphatase activity"/>
    <property type="evidence" value="ECO:0000266"/>
    <property type="project" value="MGI"/>
</dbReference>
<dbReference type="GO" id="GO:0004722">
    <property type="term" value="F:protein serine/threonine phosphatase activity"/>
    <property type="evidence" value="ECO:0000250"/>
    <property type="project" value="UniProtKB"/>
</dbReference>
<dbReference type="GO" id="GO:0004725">
    <property type="term" value="F:protein tyrosine phosphatase activity"/>
    <property type="evidence" value="ECO:0000250"/>
    <property type="project" value="UniProtKB"/>
</dbReference>
<dbReference type="GO" id="GO:0043021">
    <property type="term" value="F:ribonucleoprotein complex binding"/>
    <property type="evidence" value="ECO:0007669"/>
    <property type="project" value="Ensembl"/>
</dbReference>
<dbReference type="GO" id="GO:0007006">
    <property type="term" value="P:mitochondrial membrane organization"/>
    <property type="evidence" value="ECO:0000250"/>
    <property type="project" value="UniProtKB"/>
</dbReference>
<dbReference type="GO" id="GO:0006470">
    <property type="term" value="P:protein dephosphorylation"/>
    <property type="evidence" value="ECO:0000250"/>
    <property type="project" value="UniProtKB"/>
</dbReference>
<dbReference type="GO" id="GO:0030150">
    <property type="term" value="P:protein import into mitochondrial matrix"/>
    <property type="evidence" value="ECO:0000250"/>
    <property type="project" value="UniProtKB"/>
</dbReference>
<dbReference type="GO" id="GO:0001836">
    <property type="term" value="P:release of cytochrome c from mitochondria"/>
    <property type="evidence" value="ECO:0000266"/>
    <property type="project" value="MGI"/>
</dbReference>
<dbReference type="CDD" id="cd07521">
    <property type="entry name" value="HAD_FCP1-like"/>
    <property type="match status" value="1"/>
</dbReference>
<dbReference type="FunFam" id="3.40.50.1000:FF:000019">
    <property type="entry name" value="Mitochondrial import inner membrane translocase subunit TIM50"/>
    <property type="match status" value="1"/>
</dbReference>
<dbReference type="Gene3D" id="3.40.50.1000">
    <property type="entry name" value="HAD superfamily/HAD-like"/>
    <property type="match status" value="1"/>
</dbReference>
<dbReference type="InterPro" id="IPR004274">
    <property type="entry name" value="FCP1_dom"/>
</dbReference>
<dbReference type="InterPro" id="IPR036412">
    <property type="entry name" value="HAD-like_sf"/>
</dbReference>
<dbReference type="InterPro" id="IPR023214">
    <property type="entry name" value="HAD_sf"/>
</dbReference>
<dbReference type="InterPro" id="IPR050365">
    <property type="entry name" value="TIM50"/>
</dbReference>
<dbReference type="PANTHER" id="PTHR12210">
    <property type="entry name" value="DULLARD PROTEIN PHOSPHATASE"/>
    <property type="match status" value="1"/>
</dbReference>
<dbReference type="Pfam" id="PF03031">
    <property type="entry name" value="NIF"/>
    <property type="match status" value="1"/>
</dbReference>
<dbReference type="SMART" id="SM00577">
    <property type="entry name" value="CPDc"/>
    <property type="match status" value="1"/>
</dbReference>
<dbReference type="SUPFAM" id="SSF56784">
    <property type="entry name" value="HAD-like"/>
    <property type="match status" value="1"/>
</dbReference>
<dbReference type="PROSITE" id="PS50969">
    <property type="entry name" value="FCP1"/>
    <property type="match status" value="1"/>
</dbReference>
<gene>
    <name type="primary">Timm50</name>
    <name type="synonym">Tim50</name>
</gene>
<reference key="1">
    <citation type="journal article" date="2004" name="J. Biol. Chem.">
        <title>Tim50, a component of the mitochondrial translocator, regulates mitochondrial integrity and cell death.</title>
        <authorList>
            <person name="Guo Y."/>
            <person name="Cheong N."/>
            <person name="Zhang Z."/>
            <person name="De Rose R."/>
            <person name="Deng Y."/>
            <person name="Farber S.A."/>
            <person name="Fernandes-Alnemri T."/>
            <person name="Alnemri E.S."/>
        </authorList>
    </citation>
    <scope>NUCLEOTIDE SEQUENCE [MRNA]</scope>
    <source>
        <strain>C57BL/6J</strain>
    </source>
</reference>
<reference key="2">
    <citation type="journal article" date="2005" name="Science">
        <title>The transcriptional landscape of the mammalian genome.</title>
        <authorList>
            <person name="Carninci P."/>
            <person name="Kasukawa T."/>
            <person name="Katayama S."/>
            <person name="Gough J."/>
            <person name="Frith M.C."/>
            <person name="Maeda N."/>
            <person name="Oyama R."/>
            <person name="Ravasi T."/>
            <person name="Lenhard B."/>
            <person name="Wells C."/>
            <person name="Kodzius R."/>
            <person name="Shimokawa K."/>
            <person name="Bajic V.B."/>
            <person name="Brenner S.E."/>
            <person name="Batalov S."/>
            <person name="Forrest A.R."/>
            <person name="Zavolan M."/>
            <person name="Davis M.J."/>
            <person name="Wilming L.G."/>
            <person name="Aidinis V."/>
            <person name="Allen J.E."/>
            <person name="Ambesi-Impiombato A."/>
            <person name="Apweiler R."/>
            <person name="Aturaliya R.N."/>
            <person name="Bailey T.L."/>
            <person name="Bansal M."/>
            <person name="Baxter L."/>
            <person name="Beisel K.W."/>
            <person name="Bersano T."/>
            <person name="Bono H."/>
            <person name="Chalk A.M."/>
            <person name="Chiu K.P."/>
            <person name="Choudhary V."/>
            <person name="Christoffels A."/>
            <person name="Clutterbuck D.R."/>
            <person name="Crowe M.L."/>
            <person name="Dalla E."/>
            <person name="Dalrymple B.P."/>
            <person name="de Bono B."/>
            <person name="Della Gatta G."/>
            <person name="di Bernardo D."/>
            <person name="Down T."/>
            <person name="Engstrom P."/>
            <person name="Fagiolini M."/>
            <person name="Faulkner G."/>
            <person name="Fletcher C.F."/>
            <person name="Fukushima T."/>
            <person name="Furuno M."/>
            <person name="Futaki S."/>
            <person name="Gariboldi M."/>
            <person name="Georgii-Hemming P."/>
            <person name="Gingeras T.R."/>
            <person name="Gojobori T."/>
            <person name="Green R.E."/>
            <person name="Gustincich S."/>
            <person name="Harbers M."/>
            <person name="Hayashi Y."/>
            <person name="Hensch T.K."/>
            <person name="Hirokawa N."/>
            <person name="Hill D."/>
            <person name="Huminiecki L."/>
            <person name="Iacono M."/>
            <person name="Ikeo K."/>
            <person name="Iwama A."/>
            <person name="Ishikawa T."/>
            <person name="Jakt M."/>
            <person name="Kanapin A."/>
            <person name="Katoh M."/>
            <person name="Kawasawa Y."/>
            <person name="Kelso J."/>
            <person name="Kitamura H."/>
            <person name="Kitano H."/>
            <person name="Kollias G."/>
            <person name="Krishnan S.P."/>
            <person name="Kruger A."/>
            <person name="Kummerfeld S.K."/>
            <person name="Kurochkin I.V."/>
            <person name="Lareau L.F."/>
            <person name="Lazarevic D."/>
            <person name="Lipovich L."/>
            <person name="Liu J."/>
            <person name="Liuni S."/>
            <person name="McWilliam S."/>
            <person name="Madan Babu M."/>
            <person name="Madera M."/>
            <person name="Marchionni L."/>
            <person name="Matsuda H."/>
            <person name="Matsuzawa S."/>
            <person name="Miki H."/>
            <person name="Mignone F."/>
            <person name="Miyake S."/>
            <person name="Morris K."/>
            <person name="Mottagui-Tabar S."/>
            <person name="Mulder N."/>
            <person name="Nakano N."/>
            <person name="Nakauchi H."/>
            <person name="Ng P."/>
            <person name="Nilsson R."/>
            <person name="Nishiguchi S."/>
            <person name="Nishikawa S."/>
            <person name="Nori F."/>
            <person name="Ohara O."/>
            <person name="Okazaki Y."/>
            <person name="Orlando V."/>
            <person name="Pang K.C."/>
            <person name="Pavan W.J."/>
            <person name="Pavesi G."/>
            <person name="Pesole G."/>
            <person name="Petrovsky N."/>
            <person name="Piazza S."/>
            <person name="Reed J."/>
            <person name="Reid J.F."/>
            <person name="Ring B.Z."/>
            <person name="Ringwald M."/>
            <person name="Rost B."/>
            <person name="Ruan Y."/>
            <person name="Salzberg S.L."/>
            <person name="Sandelin A."/>
            <person name="Schneider C."/>
            <person name="Schoenbach C."/>
            <person name="Sekiguchi K."/>
            <person name="Semple C.A."/>
            <person name="Seno S."/>
            <person name="Sessa L."/>
            <person name="Sheng Y."/>
            <person name="Shibata Y."/>
            <person name="Shimada H."/>
            <person name="Shimada K."/>
            <person name="Silva D."/>
            <person name="Sinclair B."/>
            <person name="Sperling S."/>
            <person name="Stupka E."/>
            <person name="Sugiura K."/>
            <person name="Sultana R."/>
            <person name="Takenaka Y."/>
            <person name="Taki K."/>
            <person name="Tammoja K."/>
            <person name="Tan S.L."/>
            <person name="Tang S."/>
            <person name="Taylor M.S."/>
            <person name="Tegner J."/>
            <person name="Teichmann S.A."/>
            <person name="Ueda H.R."/>
            <person name="van Nimwegen E."/>
            <person name="Verardo R."/>
            <person name="Wei C.L."/>
            <person name="Yagi K."/>
            <person name="Yamanishi H."/>
            <person name="Zabarovsky E."/>
            <person name="Zhu S."/>
            <person name="Zimmer A."/>
            <person name="Hide W."/>
            <person name="Bult C."/>
            <person name="Grimmond S.M."/>
            <person name="Teasdale R.D."/>
            <person name="Liu E.T."/>
            <person name="Brusic V."/>
            <person name="Quackenbush J."/>
            <person name="Wahlestedt C."/>
            <person name="Mattick J.S."/>
            <person name="Hume D.A."/>
            <person name="Kai C."/>
            <person name="Sasaki D."/>
            <person name="Tomaru Y."/>
            <person name="Fukuda S."/>
            <person name="Kanamori-Katayama M."/>
            <person name="Suzuki M."/>
            <person name="Aoki J."/>
            <person name="Arakawa T."/>
            <person name="Iida J."/>
            <person name="Imamura K."/>
            <person name="Itoh M."/>
            <person name="Kato T."/>
            <person name="Kawaji H."/>
            <person name="Kawagashira N."/>
            <person name="Kawashima T."/>
            <person name="Kojima M."/>
            <person name="Kondo S."/>
            <person name="Konno H."/>
            <person name="Nakano K."/>
            <person name="Ninomiya N."/>
            <person name="Nishio T."/>
            <person name="Okada M."/>
            <person name="Plessy C."/>
            <person name="Shibata K."/>
            <person name="Shiraki T."/>
            <person name="Suzuki S."/>
            <person name="Tagami M."/>
            <person name="Waki K."/>
            <person name="Watahiki A."/>
            <person name="Okamura-Oho Y."/>
            <person name="Suzuki H."/>
            <person name="Kawai J."/>
            <person name="Hayashizaki Y."/>
        </authorList>
    </citation>
    <scope>NUCLEOTIDE SEQUENCE [LARGE SCALE MRNA]</scope>
    <source>
        <strain>C57BL/6J</strain>
        <tissue>Placenta</tissue>
        <tissue>Small intestine</tissue>
    </source>
</reference>
<reference key="3">
    <citation type="journal article" date="2004" name="Genome Res.">
        <title>The status, quality, and expansion of the NIH full-length cDNA project: the Mammalian Gene Collection (MGC).</title>
        <authorList>
            <consortium name="The MGC Project Team"/>
        </authorList>
    </citation>
    <scope>NUCLEOTIDE SEQUENCE [LARGE SCALE MRNA] OF 5-353</scope>
    <source>
        <strain>FVB/N</strain>
        <strain>FVB/N-3</strain>
        <tissue>Mammary gland</tissue>
    </source>
</reference>
<reference key="4">
    <citation type="submission" date="2007-04" db="UniProtKB">
        <authorList>
            <person name="Lubec G."/>
            <person name="Kang S.U."/>
        </authorList>
    </citation>
    <scope>PROTEIN SEQUENCE OF 48-64 AND 275-284</scope>
    <scope>IDENTIFICATION BY MASS SPECTROMETRY</scope>
    <source>
        <strain>C57BL/6J</strain>
        <tissue>Brain</tissue>
    </source>
</reference>
<reference key="5">
    <citation type="journal article" date="2010" name="Cell">
        <title>A tissue-specific atlas of mouse protein phosphorylation and expression.</title>
        <authorList>
            <person name="Huttlin E.L."/>
            <person name="Jedrychowski M.P."/>
            <person name="Elias J.E."/>
            <person name="Goswami T."/>
            <person name="Rad R."/>
            <person name="Beausoleil S.A."/>
            <person name="Villen J."/>
            <person name="Haas W."/>
            <person name="Sowa M.E."/>
            <person name="Gygi S.P."/>
        </authorList>
    </citation>
    <scope>IDENTIFICATION BY MASS SPECTROMETRY [LARGE SCALE ANALYSIS]</scope>
    <source>
        <tissue>Brain</tissue>
        <tissue>Brown adipose tissue</tissue>
        <tissue>Heart</tissue>
        <tissue>Kidney</tissue>
        <tissue>Liver</tissue>
        <tissue>Lung</tissue>
        <tissue>Pancreas</tissue>
        <tissue>Spleen</tissue>
        <tissue>Testis</tissue>
    </source>
</reference>
<name>TIM50_MOUSE</name>
<accession>Q9D880</accession>
<accession>Q8R3A7</accession>
<accession>Q91Z17</accession>
<proteinExistence type="evidence at protein level"/>